<accession>Q63474</accession>
<name>DDR1_RAT</name>
<feature type="signal peptide" evidence="3">
    <location>
        <begin position="1"/>
        <end position="19"/>
    </location>
</feature>
<feature type="chain" id="PRO_0000016745" description="Epithelial discoidin domain-containing receptor 1">
    <location>
        <begin position="20"/>
        <end position="910"/>
    </location>
</feature>
<feature type="topological domain" description="Extracellular" evidence="3">
    <location>
        <begin position="22"/>
        <end position="414"/>
    </location>
</feature>
<feature type="transmembrane region" description="Helical" evidence="3">
    <location>
        <begin position="415"/>
        <end position="435"/>
    </location>
</feature>
<feature type="topological domain" description="Cytoplasmic" evidence="3">
    <location>
        <begin position="436"/>
        <end position="910"/>
    </location>
</feature>
<feature type="domain" description="F5/8 type C" evidence="4">
    <location>
        <begin position="32"/>
        <end position="186"/>
    </location>
</feature>
<feature type="domain" description="Protein kinase" evidence="5">
    <location>
        <begin position="607"/>
        <end position="902"/>
    </location>
</feature>
<feature type="region of interest" description="DS-like domain" evidence="1">
    <location>
        <begin position="193"/>
        <end position="368"/>
    </location>
</feature>
<feature type="region of interest" description="Disordered" evidence="7">
    <location>
        <begin position="467"/>
        <end position="494"/>
    </location>
</feature>
<feature type="short sequence motif" description="PPxY motif">
    <location>
        <begin position="478"/>
        <end position="481"/>
    </location>
</feature>
<feature type="active site" description="Proton acceptor" evidence="5 6">
    <location>
        <position position="763"/>
    </location>
</feature>
<feature type="binding site" evidence="1">
    <location>
        <position position="212"/>
    </location>
    <ligand>
        <name>Ca(2+)</name>
        <dbReference type="ChEBI" id="CHEBI:29108"/>
        <label>1</label>
    </ligand>
</feature>
<feature type="binding site" evidence="1">
    <location>
        <position position="231"/>
    </location>
    <ligand>
        <name>Ca(2+)</name>
        <dbReference type="ChEBI" id="CHEBI:29108"/>
        <label>1</label>
    </ligand>
</feature>
<feature type="binding site" evidence="1">
    <location>
        <position position="231"/>
    </location>
    <ligand>
        <name>Ca(2+)</name>
        <dbReference type="ChEBI" id="CHEBI:29108"/>
        <label>2</label>
    </ligand>
</feature>
<feature type="binding site" evidence="1">
    <location>
        <position position="234"/>
    </location>
    <ligand>
        <name>Ca(2+)</name>
        <dbReference type="ChEBI" id="CHEBI:29108"/>
        <label>2</label>
    </ligand>
</feature>
<feature type="binding site" evidence="1">
    <location>
        <position position="236"/>
    </location>
    <ligand>
        <name>Ca(2+)</name>
        <dbReference type="ChEBI" id="CHEBI:29108"/>
        <label>2</label>
    </ligand>
</feature>
<feature type="binding site" evidence="1">
    <location>
        <position position="254"/>
    </location>
    <ligand>
        <name>Ca(2+)</name>
        <dbReference type="ChEBI" id="CHEBI:29108"/>
        <label>1</label>
    </ligand>
</feature>
<feature type="binding site" evidence="1">
    <location>
        <position position="256"/>
    </location>
    <ligand>
        <name>Ca(2+)</name>
        <dbReference type="ChEBI" id="CHEBI:29108"/>
        <label>1</label>
    </ligand>
</feature>
<feature type="binding site" evidence="1">
    <location>
        <position position="361"/>
    </location>
    <ligand>
        <name>Ca(2+)</name>
        <dbReference type="ChEBI" id="CHEBI:29108"/>
        <label>2</label>
    </ligand>
</feature>
<feature type="binding site" evidence="1">
    <location>
        <position position="362"/>
    </location>
    <ligand>
        <name>Ca(2+)</name>
        <dbReference type="ChEBI" id="CHEBI:29108"/>
        <label>2</label>
    </ligand>
</feature>
<feature type="binding site" evidence="5">
    <location>
        <begin position="613"/>
        <end position="621"/>
    </location>
    <ligand>
        <name>ATP</name>
        <dbReference type="ChEBI" id="CHEBI:30616"/>
    </ligand>
</feature>
<feature type="binding site" evidence="5">
    <location>
        <position position="652"/>
    </location>
    <ligand>
        <name>ATP</name>
        <dbReference type="ChEBI" id="CHEBI:30616"/>
    </ligand>
</feature>
<feature type="modified residue" description="Phosphotyrosine; by autocatalysis" evidence="2">
    <location>
        <position position="481"/>
    </location>
</feature>
<feature type="modified residue" description="Phosphotyrosine; by autocatalysis" evidence="2">
    <location>
        <position position="510"/>
    </location>
</feature>
<feature type="modified residue" description="Phosphotyrosine; by autocatalysis" evidence="2">
    <location>
        <position position="517"/>
    </location>
</feature>
<feature type="modified residue" description="Phosphotyrosine; by autocatalysis" evidence="2">
    <location>
        <position position="737"/>
    </location>
</feature>
<feature type="modified residue" description="Phosphotyrosine; by autocatalysis" evidence="2">
    <location>
        <position position="789"/>
    </location>
</feature>
<feature type="modified residue" description="Phosphotyrosine; by autocatalysis" evidence="2">
    <location>
        <position position="793"/>
    </location>
</feature>
<feature type="modified residue" description="Phosphotyrosine; by autocatalysis" evidence="2">
    <location>
        <position position="794"/>
    </location>
</feature>
<feature type="glycosylation site" description="N-linked (GlcNAc...) asparagine" evidence="3">
    <location>
        <position position="212"/>
    </location>
</feature>
<feature type="glycosylation site" description="N-linked (GlcNAc...) asparagine" evidence="3">
    <location>
        <position position="261"/>
    </location>
</feature>
<feature type="glycosylation site" description="N-linked (GlcNAc...) asparagine" evidence="3">
    <location>
        <position position="371"/>
    </location>
</feature>
<feature type="glycosylation site" description="N-linked (GlcNAc...) asparagine" evidence="3">
    <location>
        <position position="391"/>
    </location>
</feature>
<feature type="disulfide bond" evidence="4">
    <location>
        <begin position="32"/>
        <end position="186"/>
    </location>
</feature>
<feature type="disulfide bond" evidence="4">
    <location>
        <begin position="75"/>
        <end position="178"/>
    </location>
</feature>
<feature type="disulfide bond" evidence="4">
    <location>
        <begin position="304"/>
        <end position="349"/>
    </location>
</feature>
<evidence type="ECO:0000250" key="1"/>
<evidence type="ECO:0000250" key="2">
    <source>
        <dbReference type="UniProtKB" id="Q08345"/>
    </source>
</evidence>
<evidence type="ECO:0000255" key="3"/>
<evidence type="ECO:0000255" key="4">
    <source>
        <dbReference type="PROSITE-ProRule" id="PRU00081"/>
    </source>
</evidence>
<evidence type="ECO:0000255" key="5">
    <source>
        <dbReference type="PROSITE-ProRule" id="PRU00159"/>
    </source>
</evidence>
<evidence type="ECO:0000255" key="6">
    <source>
        <dbReference type="PROSITE-ProRule" id="PRU10028"/>
    </source>
</evidence>
<evidence type="ECO:0000256" key="7">
    <source>
        <dbReference type="SAM" id="MobiDB-lite"/>
    </source>
</evidence>
<gene>
    <name type="primary">Ddr1</name>
    <name type="synonym">Eddr1</name>
    <name type="synonym">Ptk3</name>
</gene>
<reference key="1">
    <citation type="journal article" date="1994" name="Proc. Natl. Acad. Sci. U.S.A.">
        <title>Multiple tyrosine protein kinases in rat hippocampal neurons: isolation of Ptk-3, a receptor expressed in proliferative zones of the developing brain.</title>
        <authorList>
            <person name="Sanchez M.P."/>
            <person name="Tapley P."/>
            <person name="Saini S.S."/>
            <person name="He B."/>
            <person name="Pulido D."/>
            <person name="Barbacid M."/>
        </authorList>
    </citation>
    <scope>NUCLEOTIDE SEQUENCE [GENOMIC DNA]</scope>
    <source>
        <strain>Sprague-Dawley</strain>
        <tissue>Brain</tissue>
    </source>
</reference>
<comment type="function">
    <text evidence="1">Tyrosine kinase that functions as a cell surface receptor for fibrillar collagen and regulates cell attachment to the extracellular matrix, remodeling of the extracellular matrix, cell migration, differentiation, survival and cell proliferation. Collagen binding triggers a signaling pathway that involves SRC and leads to the activation of MAP kinases. Regulates remodeling of the extracellular matrix by up-regulation of the matrix metalloproteinases MMP2, MMP7 and MMP9, and thereby facilitates cell migration and wound healing. Promotes smooth muscle cell migration, and thereby contributes to arterial wound healing. Also plays a role in tumor cell invasion. Phosphorylates PTPN11. Required for normal blastocyst implantation during pregnancy, for normal mammary gland differentiation and normal lactation. Required for normal ear morphology and normal hearing (By similarity).</text>
</comment>
<comment type="catalytic activity">
    <reaction evidence="6">
        <text>L-tyrosyl-[protein] + ATP = O-phospho-L-tyrosyl-[protein] + ADP + H(+)</text>
        <dbReference type="Rhea" id="RHEA:10596"/>
        <dbReference type="Rhea" id="RHEA-COMP:10136"/>
        <dbReference type="Rhea" id="RHEA-COMP:20101"/>
        <dbReference type="ChEBI" id="CHEBI:15378"/>
        <dbReference type="ChEBI" id="CHEBI:30616"/>
        <dbReference type="ChEBI" id="CHEBI:46858"/>
        <dbReference type="ChEBI" id="CHEBI:61978"/>
        <dbReference type="ChEBI" id="CHEBI:456216"/>
        <dbReference type="EC" id="2.7.10.1"/>
    </reaction>
</comment>
<comment type="subunit">
    <text evidence="1">Homodimer. Interacts (via PPxY motif) with WWC1 (via WW domains) in a collagen-regulated manner. Forms a tripartite complex with WWC1 and PRKCZ, but predominantly in the absence of collagen. Interacts (tyrosine phosphorylated) with SHC1. Interacts with SRC. Interacts with MYH9. Interacts with CDH1. Interacts with PTPN11. Interacts with NCK2 (By similarity).</text>
</comment>
<comment type="subcellular location">
    <subcellularLocation>
        <location evidence="1">Cell membrane</location>
        <topology evidence="1">Single-pass type I membrane protein</topology>
    </subcellularLocation>
</comment>
<comment type="tissue specificity">
    <text>Various embryonic and adult tissues; also proliferative zones of the developing brain; hippocampal neurons.</text>
</comment>
<comment type="PTM">
    <text evidence="1">Autophosphorylated in response to fibrillar collagen binding.</text>
</comment>
<comment type="similarity">
    <text evidence="5">Belongs to the protein kinase superfamily. Tyr protein kinase family. Insulin receptor subfamily.</text>
</comment>
<dbReference type="EC" id="2.7.10.1"/>
<dbReference type="EMBL" id="L26525">
    <property type="protein sequence ID" value="AAA21089.1"/>
    <property type="molecule type" value="Genomic_DNA"/>
</dbReference>
<dbReference type="PIR" id="A53137">
    <property type="entry name" value="A53137"/>
</dbReference>
<dbReference type="SMR" id="Q63474"/>
<dbReference type="FunCoup" id="Q63474">
    <property type="interactions" value="528"/>
</dbReference>
<dbReference type="IntAct" id="Q63474">
    <property type="interactions" value="1"/>
</dbReference>
<dbReference type="STRING" id="10116.ENSRNOP00000075331"/>
<dbReference type="BindingDB" id="Q63474"/>
<dbReference type="ChEMBL" id="CHEMBL4295859"/>
<dbReference type="GlyCosmos" id="Q63474">
    <property type="glycosylation" value="4 sites, No reported glycans"/>
</dbReference>
<dbReference type="GlyGen" id="Q63474">
    <property type="glycosylation" value="5 sites"/>
</dbReference>
<dbReference type="iPTMnet" id="Q63474"/>
<dbReference type="PhosphoSitePlus" id="Q63474"/>
<dbReference type="jPOST" id="Q63474"/>
<dbReference type="PaxDb" id="10116-ENSRNOP00000001102"/>
<dbReference type="UCSC" id="RGD:2252">
    <property type="organism name" value="rat"/>
</dbReference>
<dbReference type="AGR" id="RGD:2252"/>
<dbReference type="RGD" id="2252">
    <property type="gene designation" value="Ddr1"/>
</dbReference>
<dbReference type="eggNOG" id="KOG1094">
    <property type="taxonomic scope" value="Eukaryota"/>
</dbReference>
<dbReference type="InParanoid" id="Q63474"/>
<dbReference type="PhylomeDB" id="Q63474"/>
<dbReference type="BRENDA" id="2.7.10.1">
    <property type="organism ID" value="5301"/>
</dbReference>
<dbReference type="Reactome" id="R-RNO-3000171">
    <property type="pathway name" value="Non-integrin membrane-ECM interactions"/>
</dbReference>
<dbReference type="PRO" id="PR:Q63474"/>
<dbReference type="Proteomes" id="UP000002494">
    <property type="component" value="Unplaced"/>
</dbReference>
<dbReference type="GO" id="GO:0016323">
    <property type="term" value="C:basolateral plasma membrane"/>
    <property type="evidence" value="ECO:0000314"/>
    <property type="project" value="RGD"/>
</dbReference>
<dbReference type="GO" id="GO:0005903">
    <property type="term" value="C:brush border"/>
    <property type="evidence" value="ECO:0000314"/>
    <property type="project" value="RGD"/>
</dbReference>
<dbReference type="GO" id="GO:0005886">
    <property type="term" value="C:plasma membrane"/>
    <property type="evidence" value="ECO:0000266"/>
    <property type="project" value="RGD"/>
</dbReference>
<dbReference type="GO" id="GO:0043235">
    <property type="term" value="C:receptor complex"/>
    <property type="evidence" value="ECO:0000266"/>
    <property type="project" value="RGD"/>
</dbReference>
<dbReference type="GO" id="GO:0005524">
    <property type="term" value="F:ATP binding"/>
    <property type="evidence" value="ECO:0007669"/>
    <property type="project" value="UniProtKB-KW"/>
</dbReference>
<dbReference type="GO" id="GO:0005518">
    <property type="term" value="F:collagen binding"/>
    <property type="evidence" value="ECO:0000250"/>
    <property type="project" value="UniProtKB"/>
</dbReference>
<dbReference type="GO" id="GO:0046872">
    <property type="term" value="F:metal ion binding"/>
    <property type="evidence" value="ECO:0007669"/>
    <property type="project" value="UniProtKB-KW"/>
</dbReference>
<dbReference type="GO" id="GO:0038062">
    <property type="term" value="F:protein tyrosine kinase collagen receptor activity"/>
    <property type="evidence" value="ECO:0000250"/>
    <property type="project" value="UniProtKB"/>
</dbReference>
<dbReference type="GO" id="GO:0031100">
    <property type="term" value="P:animal organ regeneration"/>
    <property type="evidence" value="ECO:0000270"/>
    <property type="project" value="RGD"/>
</dbReference>
<dbReference type="GO" id="GO:0061564">
    <property type="term" value="P:axon development"/>
    <property type="evidence" value="ECO:0000266"/>
    <property type="project" value="RGD"/>
</dbReference>
<dbReference type="GO" id="GO:0060444">
    <property type="term" value="P:branching involved in mammary gland duct morphogenesis"/>
    <property type="evidence" value="ECO:0000266"/>
    <property type="project" value="RGD"/>
</dbReference>
<dbReference type="GO" id="GO:0008283">
    <property type="term" value="P:cell population proliferation"/>
    <property type="evidence" value="ECO:0000266"/>
    <property type="project" value="RGD"/>
</dbReference>
<dbReference type="GO" id="GO:0007169">
    <property type="term" value="P:cell surface receptor protein tyrosine kinase signaling pathway"/>
    <property type="evidence" value="ECO:0000318"/>
    <property type="project" value="GO_Central"/>
</dbReference>
<dbReference type="GO" id="GO:0038063">
    <property type="term" value="P:collagen-activated tyrosine kinase receptor signaling pathway"/>
    <property type="evidence" value="ECO:0000270"/>
    <property type="project" value="RGD"/>
</dbReference>
<dbReference type="GO" id="GO:0043583">
    <property type="term" value="P:ear development"/>
    <property type="evidence" value="ECO:0000266"/>
    <property type="project" value="RGD"/>
</dbReference>
<dbReference type="GO" id="GO:0007566">
    <property type="term" value="P:embryo implantation"/>
    <property type="evidence" value="ECO:0000266"/>
    <property type="project" value="RGD"/>
</dbReference>
<dbReference type="GO" id="GO:0007595">
    <property type="term" value="P:lactation"/>
    <property type="evidence" value="ECO:0007669"/>
    <property type="project" value="UniProtKB-KW"/>
</dbReference>
<dbReference type="GO" id="GO:0060749">
    <property type="term" value="P:mammary gland alveolus development"/>
    <property type="evidence" value="ECO:0000266"/>
    <property type="project" value="RGD"/>
</dbReference>
<dbReference type="GO" id="GO:0008285">
    <property type="term" value="P:negative regulation of cell population proliferation"/>
    <property type="evidence" value="ECO:0000266"/>
    <property type="project" value="RGD"/>
</dbReference>
<dbReference type="GO" id="GO:1990138">
    <property type="term" value="P:neuron projection extension"/>
    <property type="evidence" value="ECO:0000266"/>
    <property type="project" value="RGD"/>
</dbReference>
<dbReference type="GO" id="GO:0038083">
    <property type="term" value="P:peptidyl-tyrosine autophosphorylation"/>
    <property type="evidence" value="ECO:0000250"/>
    <property type="project" value="UniProtKB"/>
</dbReference>
<dbReference type="GO" id="GO:0010976">
    <property type="term" value="P:positive regulation of neuron projection development"/>
    <property type="evidence" value="ECO:0000318"/>
    <property type="project" value="GO_Central"/>
</dbReference>
<dbReference type="GO" id="GO:0051897">
    <property type="term" value="P:positive regulation of phosphatidylinositol 3-kinase/protein kinase B signal transduction"/>
    <property type="evidence" value="ECO:0000318"/>
    <property type="project" value="GO_Central"/>
</dbReference>
<dbReference type="GO" id="GO:0001558">
    <property type="term" value="P:regulation of cell growth"/>
    <property type="evidence" value="ECO:0000266"/>
    <property type="project" value="RGD"/>
</dbReference>
<dbReference type="GO" id="GO:0001952">
    <property type="term" value="P:regulation of cell-matrix adhesion"/>
    <property type="evidence" value="ECO:0000266"/>
    <property type="project" value="RGD"/>
</dbReference>
<dbReference type="GO" id="GO:0010715">
    <property type="term" value="P:regulation of extracellular matrix disassembly"/>
    <property type="evidence" value="ECO:0000250"/>
    <property type="project" value="UniProtKB"/>
</dbReference>
<dbReference type="GO" id="GO:0043588">
    <property type="term" value="P:skin development"/>
    <property type="evidence" value="ECO:0000270"/>
    <property type="project" value="RGD"/>
</dbReference>
<dbReference type="GO" id="GO:0014909">
    <property type="term" value="P:smooth muscle cell migration"/>
    <property type="evidence" value="ECO:0000250"/>
    <property type="project" value="UniProtKB"/>
</dbReference>
<dbReference type="GO" id="GO:0061302">
    <property type="term" value="P:smooth muscle cell-matrix adhesion"/>
    <property type="evidence" value="ECO:0000250"/>
    <property type="project" value="UniProtKB"/>
</dbReference>
<dbReference type="GO" id="GO:0044319">
    <property type="term" value="P:wound healing, spreading of cells"/>
    <property type="evidence" value="ECO:0000250"/>
    <property type="project" value="UniProtKB"/>
</dbReference>
<dbReference type="CDD" id="cd00057">
    <property type="entry name" value="FA58C"/>
    <property type="match status" value="1"/>
</dbReference>
<dbReference type="FunFam" id="2.60.120.260:FF:000007">
    <property type="entry name" value="Discoidin domain receptor tyrosine kinase 1"/>
    <property type="match status" value="1"/>
</dbReference>
<dbReference type="FunFam" id="1.10.510.10:FF:000053">
    <property type="entry name" value="Epithelial discoidin domain-containing receptor 1"/>
    <property type="match status" value="1"/>
</dbReference>
<dbReference type="FunFam" id="3.30.200.20:FF:000082">
    <property type="entry name" value="Epithelial discoidin domain-containing receptor 1"/>
    <property type="match status" value="1"/>
</dbReference>
<dbReference type="FunFam" id="2.60.120.1190:FF:000002">
    <property type="entry name" value="epithelial discoidin domain-containing receptor 1"/>
    <property type="match status" value="1"/>
</dbReference>
<dbReference type="Gene3D" id="2.60.120.1190">
    <property type="match status" value="1"/>
</dbReference>
<dbReference type="Gene3D" id="2.60.120.260">
    <property type="entry name" value="Galactose-binding domain-like"/>
    <property type="match status" value="1"/>
</dbReference>
<dbReference type="Gene3D" id="3.30.200.20">
    <property type="entry name" value="Phosphorylase Kinase, domain 1"/>
    <property type="match status" value="1"/>
</dbReference>
<dbReference type="Gene3D" id="1.10.510.10">
    <property type="entry name" value="Transferase(Phosphotransferase) domain 1"/>
    <property type="match status" value="1"/>
</dbReference>
<dbReference type="InterPro" id="IPR048525">
    <property type="entry name" value="DDR1-2_DS-like"/>
</dbReference>
<dbReference type="InterPro" id="IPR000421">
    <property type="entry name" value="FA58C"/>
</dbReference>
<dbReference type="InterPro" id="IPR008979">
    <property type="entry name" value="Galactose-bd-like_sf"/>
</dbReference>
<dbReference type="InterPro" id="IPR011009">
    <property type="entry name" value="Kinase-like_dom_sf"/>
</dbReference>
<dbReference type="InterPro" id="IPR000719">
    <property type="entry name" value="Prot_kinase_dom"/>
</dbReference>
<dbReference type="InterPro" id="IPR050122">
    <property type="entry name" value="RTK"/>
</dbReference>
<dbReference type="InterPro" id="IPR001245">
    <property type="entry name" value="Ser-Thr/Tyr_kinase_cat_dom"/>
</dbReference>
<dbReference type="InterPro" id="IPR008266">
    <property type="entry name" value="Tyr_kinase_AS"/>
</dbReference>
<dbReference type="InterPro" id="IPR020635">
    <property type="entry name" value="Tyr_kinase_cat_dom"/>
</dbReference>
<dbReference type="InterPro" id="IPR002011">
    <property type="entry name" value="Tyr_kinase_rcpt_2_CS"/>
</dbReference>
<dbReference type="PANTHER" id="PTHR24416:SF333">
    <property type="entry name" value="EPITHELIAL DISCOIDIN DOMAIN-CONTAINING RECEPTOR 1"/>
    <property type="match status" value="1"/>
</dbReference>
<dbReference type="PANTHER" id="PTHR24416">
    <property type="entry name" value="TYROSINE-PROTEIN KINASE RECEPTOR"/>
    <property type="match status" value="1"/>
</dbReference>
<dbReference type="Pfam" id="PF21114">
    <property type="entry name" value="DDR1-2_DS-like"/>
    <property type="match status" value="1"/>
</dbReference>
<dbReference type="Pfam" id="PF00754">
    <property type="entry name" value="F5_F8_type_C"/>
    <property type="match status" value="1"/>
</dbReference>
<dbReference type="Pfam" id="PF07714">
    <property type="entry name" value="PK_Tyr_Ser-Thr"/>
    <property type="match status" value="1"/>
</dbReference>
<dbReference type="PRINTS" id="PR00109">
    <property type="entry name" value="TYRKINASE"/>
</dbReference>
<dbReference type="SMART" id="SM00231">
    <property type="entry name" value="FA58C"/>
    <property type="match status" value="1"/>
</dbReference>
<dbReference type="SMART" id="SM00219">
    <property type="entry name" value="TyrKc"/>
    <property type="match status" value="1"/>
</dbReference>
<dbReference type="SUPFAM" id="SSF49785">
    <property type="entry name" value="Galactose-binding domain-like"/>
    <property type="match status" value="1"/>
</dbReference>
<dbReference type="SUPFAM" id="SSF56112">
    <property type="entry name" value="Protein kinase-like (PK-like)"/>
    <property type="match status" value="1"/>
</dbReference>
<dbReference type="PROSITE" id="PS01285">
    <property type="entry name" value="FA58C_1"/>
    <property type="match status" value="1"/>
</dbReference>
<dbReference type="PROSITE" id="PS01286">
    <property type="entry name" value="FA58C_2"/>
    <property type="match status" value="1"/>
</dbReference>
<dbReference type="PROSITE" id="PS50022">
    <property type="entry name" value="FA58C_3"/>
    <property type="match status" value="1"/>
</dbReference>
<dbReference type="PROSITE" id="PS50011">
    <property type="entry name" value="PROTEIN_KINASE_DOM"/>
    <property type="match status" value="1"/>
</dbReference>
<dbReference type="PROSITE" id="PS00109">
    <property type="entry name" value="PROTEIN_KINASE_TYR"/>
    <property type="match status" value="1"/>
</dbReference>
<dbReference type="PROSITE" id="PS00239">
    <property type="entry name" value="RECEPTOR_TYR_KIN_II"/>
    <property type="match status" value="1"/>
</dbReference>
<protein>
    <recommendedName>
        <fullName>Epithelial discoidin domain-containing receptor 1</fullName>
        <shortName>Epithelial discoidin domain receptor 1</shortName>
        <ecNumber>2.7.10.1</ecNumber>
    </recommendedName>
    <alternativeName>
        <fullName>CD167 antigen-like family member A</fullName>
    </alternativeName>
    <alternativeName>
        <fullName>Cell adhesion kinase</fullName>
    </alternativeName>
    <alternativeName>
        <fullName>Discoidin receptor tyrosine kinase</fullName>
    </alternativeName>
    <alternativeName>
        <fullName>Protein-tyrosine kinase 3</fullName>
    </alternativeName>
    <alternativeName>
        <fullName>Tyrosine kinase DDR</fullName>
    </alternativeName>
    <alternativeName>
        <fullName>Tyrosine-protein kinase CAK</fullName>
    </alternativeName>
    <cdAntigenName>CD167a</cdAntigenName>
</protein>
<proteinExistence type="evidence at transcript level"/>
<organism>
    <name type="scientific">Rattus norvegicus</name>
    <name type="common">Rat</name>
    <dbReference type="NCBI Taxonomy" id="10116"/>
    <lineage>
        <taxon>Eukaryota</taxon>
        <taxon>Metazoa</taxon>
        <taxon>Chordata</taxon>
        <taxon>Craniata</taxon>
        <taxon>Vertebrata</taxon>
        <taxon>Euteleostomi</taxon>
        <taxon>Mammalia</taxon>
        <taxon>Eutheria</taxon>
        <taxon>Euarchontoglires</taxon>
        <taxon>Glires</taxon>
        <taxon>Rodentia</taxon>
        <taxon>Myomorpha</taxon>
        <taxon>Muroidea</taxon>
        <taxon>Muridae</taxon>
        <taxon>Murinae</taxon>
        <taxon>Rattus</taxon>
    </lineage>
</organism>
<keyword id="KW-0067">ATP-binding</keyword>
<keyword id="KW-0106">Calcium</keyword>
<keyword id="KW-1003">Cell membrane</keyword>
<keyword id="KW-1015">Disulfide bond</keyword>
<keyword id="KW-0325">Glycoprotein</keyword>
<keyword id="KW-0418">Kinase</keyword>
<keyword id="KW-0421">Lactation</keyword>
<keyword id="KW-0472">Membrane</keyword>
<keyword id="KW-0479">Metal-binding</keyword>
<keyword id="KW-0547">Nucleotide-binding</keyword>
<keyword id="KW-0597">Phosphoprotein</keyword>
<keyword id="KW-0635">Pregnancy</keyword>
<keyword id="KW-0675">Receptor</keyword>
<keyword id="KW-1185">Reference proteome</keyword>
<keyword id="KW-0732">Signal</keyword>
<keyword id="KW-0808">Transferase</keyword>
<keyword id="KW-0812">Transmembrane</keyword>
<keyword id="KW-1133">Transmembrane helix</keyword>
<keyword id="KW-0829">Tyrosine-protein kinase</keyword>
<sequence length="910" mass="101165">MGTGTLSSLLLLLLLVTIGDADMKGHFDPAKCRYALGMQDRTIPDSDISVSSSWSDSTAARHSRLESSDGDGAWCPAGPVFPKEEEYLQVDLRRLHLVALVGTQGRHAGGLGKEFSRSYRLRYSRDGRRWMDWKDRWGQEVISGNEDPGGVVLKDLGPPMVARLVRFYPRADRVMSVCLRVELYGCLWRDGLLSYTAPVGQTMQLSEMVYLNDSTYDGYTAGGLQYGGLGQLADGVVGLDDFRQSQELRVWPGYDYVGWSNHSFPSGYVEMEFEFDRLRSFQTMQVHCNNMHTLGARLPGGVECRFKRGPAMAWEGEPVHHALGGSLGDPRARAISVPLGGHVGRFLQCRFLFAGPWLLFSEISFISDVVNDSSDTFPPAPWWPPGPPPTNFSSLELEPRGQQPVAKAEGSPTAILIGCLVAIILLLLLIIALMLWRLHWRRLLSKAERRVLEEELTVHLSVPGDTILINNRPGPREPPPYQEPRPRGTPTHSAPCVPNGSALLLSNPAYRLLLATYARPPRGPGPPTPAWAKPTNTQACSGDYMEPEKPGAPLLPPPPQNSVPHYAEADIVTLQGVTGGNTYAVPALPPGAVGDGPPRVDFPRSRLRFKEKLGEGQFGEVHLCEVEDPQDLVTSDFPISVQKGHPLLVAVKILRPDATKNARNDFLKEVKIMSRLKDLNIIRLLGVCVQDDPLCMITDYMENGDLNQFLSAHQLENKVTQGLPGDRESDQGPTISYPMLLHVGAQIASGMRYLATLNFVHRDLATRNCLVGENFTIKIADFGMSRNLYAGDYYRVQGRAVLPIRWMAWECILMGKFTTASDVWAFGVTLWEVLMLCRSQPFGQLTDEQVIENAGEFFRDQGRQVYLSRPPACPQTLYELMLRCWSREPEQRPPFSQLHRFLADDALNTV</sequence>